<dbReference type="EC" id="3.1.3.77" evidence="1"/>
<dbReference type="EMBL" id="AJ238888">
    <property type="protein sequence ID" value="CAB55632.1"/>
    <property type="molecule type" value="Genomic_DNA"/>
</dbReference>
<dbReference type="EMBL" id="CP000009">
    <property type="protein sequence ID" value="AAW61005.1"/>
    <property type="molecule type" value="Genomic_DNA"/>
</dbReference>
<dbReference type="RefSeq" id="WP_011252797.1">
    <property type="nucleotide sequence ID" value="NC_006677.1"/>
</dbReference>
<dbReference type="SMR" id="Q5FRJ1"/>
<dbReference type="STRING" id="290633.GOX1244"/>
<dbReference type="KEGG" id="gox:GOX1244"/>
<dbReference type="eggNOG" id="COG4229">
    <property type="taxonomic scope" value="Bacteria"/>
</dbReference>
<dbReference type="HOGENOM" id="CLU_023273_0_0_5"/>
<dbReference type="UniPathway" id="UPA00904">
    <property type="reaction ID" value="UER00876"/>
</dbReference>
<dbReference type="UniPathway" id="UPA00904">
    <property type="reaction ID" value="UER00877"/>
</dbReference>
<dbReference type="Proteomes" id="UP000006375">
    <property type="component" value="Chromosome"/>
</dbReference>
<dbReference type="GO" id="GO:0043715">
    <property type="term" value="F:2,3-diketo-5-methylthiopentyl-1-phosphate enolase activity"/>
    <property type="evidence" value="ECO:0007669"/>
    <property type="project" value="UniProtKB-UniRule"/>
</dbReference>
<dbReference type="GO" id="GO:0043716">
    <property type="term" value="F:2-hydroxy-3-keto-5-methylthiopentenyl-1-phosphate phosphatase activity"/>
    <property type="evidence" value="ECO:0007669"/>
    <property type="project" value="UniProtKB-UniRule"/>
</dbReference>
<dbReference type="GO" id="GO:0043874">
    <property type="term" value="F:acireductone synthase activity"/>
    <property type="evidence" value="ECO:0007669"/>
    <property type="project" value="UniProtKB-EC"/>
</dbReference>
<dbReference type="GO" id="GO:0000287">
    <property type="term" value="F:magnesium ion binding"/>
    <property type="evidence" value="ECO:0007669"/>
    <property type="project" value="UniProtKB-UniRule"/>
</dbReference>
<dbReference type="GO" id="GO:0019509">
    <property type="term" value="P:L-methionine salvage from methylthioadenosine"/>
    <property type="evidence" value="ECO:0007669"/>
    <property type="project" value="UniProtKB-UniRule"/>
</dbReference>
<dbReference type="CDD" id="cd01629">
    <property type="entry name" value="HAD_EP"/>
    <property type="match status" value="1"/>
</dbReference>
<dbReference type="Gene3D" id="1.10.720.60">
    <property type="match status" value="1"/>
</dbReference>
<dbReference type="Gene3D" id="3.40.50.1000">
    <property type="entry name" value="HAD superfamily/HAD-like"/>
    <property type="match status" value="1"/>
</dbReference>
<dbReference type="HAMAP" id="MF_01681">
    <property type="entry name" value="Salvage_MtnC"/>
    <property type="match status" value="1"/>
</dbReference>
<dbReference type="InterPro" id="IPR023943">
    <property type="entry name" value="Enolase-ppase_E1"/>
</dbReference>
<dbReference type="InterPro" id="IPR036412">
    <property type="entry name" value="HAD-like_sf"/>
</dbReference>
<dbReference type="InterPro" id="IPR006439">
    <property type="entry name" value="HAD-SF_hydro_IA"/>
</dbReference>
<dbReference type="InterPro" id="IPR023214">
    <property type="entry name" value="HAD_sf"/>
</dbReference>
<dbReference type="NCBIfam" id="TIGR01691">
    <property type="entry name" value="enolase-ppase"/>
    <property type="match status" value="1"/>
</dbReference>
<dbReference type="PANTHER" id="PTHR20371">
    <property type="entry name" value="ENOLASE-PHOSPHATASE E1"/>
    <property type="match status" value="1"/>
</dbReference>
<dbReference type="PANTHER" id="PTHR20371:SF1">
    <property type="entry name" value="ENOLASE-PHOSPHATASE E1"/>
    <property type="match status" value="1"/>
</dbReference>
<dbReference type="Pfam" id="PF00702">
    <property type="entry name" value="Hydrolase"/>
    <property type="match status" value="1"/>
</dbReference>
<dbReference type="PRINTS" id="PR00413">
    <property type="entry name" value="HADHALOGNASE"/>
</dbReference>
<dbReference type="SFLD" id="SFLDG01133">
    <property type="entry name" value="C1.5.4:_Enolase-phosphatase_Li"/>
    <property type="match status" value="1"/>
</dbReference>
<dbReference type="SFLD" id="SFLDF00044">
    <property type="entry name" value="enolase-phosphatase"/>
    <property type="match status" value="1"/>
</dbReference>
<dbReference type="SUPFAM" id="SSF56784">
    <property type="entry name" value="HAD-like"/>
    <property type="match status" value="1"/>
</dbReference>
<sequence length="227" mass="24321">MIRLVLLDIEGTTLPISFVRDVMFPYAAKALPALMQDHTNPIVVGARADIVMEHPGQDPLKVCQDWMKADVKAAPLKTLQGLTWRQGFEDGTLQADLYPDVPPALKAWSKGGLRLAVYSSGSIPSQKLLYGHTAQGDLTPLFEDFFDLSTGGKKDAASYEKITAAVGLPADEILFLSDIGAELDAAQRAGLSVCQLVREQDGTVPHPGVPQAPDLNAVSTQFGLPVA</sequence>
<name>MTNC_GLUOX</name>
<gene>
    <name evidence="1" type="primary">mtnC</name>
    <name type="ordered locus">GOX1244</name>
</gene>
<feature type="chain" id="PRO_0000357368" description="Enolase-phosphatase E1">
    <location>
        <begin position="1"/>
        <end position="227"/>
    </location>
</feature>
<feature type="sequence conflict" description="In Ref. 1; CAB55632." evidence="2" ref="1">
    <original>I</original>
    <variation>T</variation>
    <location>
        <position position="42"/>
    </location>
</feature>
<feature type="sequence conflict" description="In Ref. 1; CAB55632." evidence="2" ref="1">
    <original>G</original>
    <variation>A</variation>
    <location>
        <position position="45"/>
    </location>
</feature>
<feature type="sequence conflict" description="In Ref. 1; CAB55632." evidence="2" ref="1">
    <original>A</original>
    <variation>Q</variation>
    <location>
        <position position="189"/>
    </location>
</feature>
<evidence type="ECO:0000255" key="1">
    <source>
        <dbReference type="HAMAP-Rule" id="MF_01681"/>
    </source>
</evidence>
<evidence type="ECO:0000305" key="2"/>
<keyword id="KW-0028">Amino-acid biosynthesis</keyword>
<keyword id="KW-0378">Hydrolase</keyword>
<keyword id="KW-0460">Magnesium</keyword>
<keyword id="KW-0479">Metal-binding</keyword>
<keyword id="KW-0486">Methionine biosynthesis</keyword>
<keyword id="KW-1185">Reference proteome</keyword>
<proteinExistence type="inferred from homology"/>
<protein>
    <recommendedName>
        <fullName evidence="1">Enolase-phosphatase E1</fullName>
        <ecNumber evidence="1">3.1.3.77</ecNumber>
    </recommendedName>
    <alternativeName>
        <fullName evidence="1">2,3-diketo-5-methylthio-1-phosphopentane phosphatase</fullName>
    </alternativeName>
</protein>
<organism>
    <name type="scientific">Gluconobacter oxydans (strain 621H)</name>
    <name type="common">Gluconobacter suboxydans</name>
    <dbReference type="NCBI Taxonomy" id="290633"/>
    <lineage>
        <taxon>Bacteria</taxon>
        <taxon>Pseudomonadati</taxon>
        <taxon>Pseudomonadota</taxon>
        <taxon>Alphaproteobacteria</taxon>
        <taxon>Acetobacterales</taxon>
        <taxon>Acetobacteraceae</taxon>
        <taxon>Gluconobacter</taxon>
    </lineage>
</organism>
<comment type="function">
    <text evidence="1">Bifunctional enzyme that catalyzes the enolization of 2,3-diketo-5-methylthiopentyl-1-phosphate (DK-MTP-1-P) into the intermediate 2-hydroxy-3-keto-5-methylthiopentenyl-1-phosphate (HK-MTPenyl-1-P), which is then dephosphorylated to form the acireductone 1,2-dihydroxy-3-keto-5-methylthiopentene (DHK-MTPene).</text>
</comment>
<comment type="catalytic activity">
    <reaction evidence="1">
        <text>5-methylsulfanyl-2,3-dioxopentyl phosphate + H2O = 1,2-dihydroxy-5-(methylsulfanyl)pent-1-en-3-one + phosphate</text>
        <dbReference type="Rhea" id="RHEA:21700"/>
        <dbReference type="ChEBI" id="CHEBI:15377"/>
        <dbReference type="ChEBI" id="CHEBI:43474"/>
        <dbReference type="ChEBI" id="CHEBI:49252"/>
        <dbReference type="ChEBI" id="CHEBI:58828"/>
        <dbReference type="EC" id="3.1.3.77"/>
    </reaction>
</comment>
<comment type="cofactor">
    <cofactor evidence="1">
        <name>Mg(2+)</name>
        <dbReference type="ChEBI" id="CHEBI:18420"/>
    </cofactor>
    <text evidence="1">Binds 1 Mg(2+) ion per subunit.</text>
</comment>
<comment type="pathway">
    <text evidence="1">Amino-acid biosynthesis; L-methionine biosynthesis via salvage pathway; L-methionine from S-methyl-5-thio-alpha-D-ribose 1-phosphate: step 3/6.</text>
</comment>
<comment type="pathway">
    <text evidence="1">Amino-acid biosynthesis; L-methionine biosynthesis via salvage pathway; L-methionine from S-methyl-5-thio-alpha-D-ribose 1-phosphate: step 4/6.</text>
</comment>
<comment type="subunit">
    <text evidence="1">Monomer.</text>
</comment>
<comment type="similarity">
    <text evidence="1">Belongs to the HAD-like hydrolase superfamily. MasA/MtnC family.</text>
</comment>
<reference key="1">
    <citation type="journal article" date="1999" name="FEMS Microbiol. Lett.">
        <title>A mutant of gluconobacter oxydans deficient in gluconic acid dehydrogenase.</title>
        <authorList>
            <person name="Gupta A."/>
            <person name="Felder M."/>
            <person name="Verma V.V."/>
            <person name="Cullum J."/>
            <person name="Qazi G.N."/>
        </authorList>
    </citation>
    <scope>NUCLEOTIDE SEQUENCE [GENOMIC DNA]</scope>
    <source>
        <strain>ATCC 9937 / LMG 1404 / NCIMB 8084</strain>
    </source>
</reference>
<reference key="2">
    <citation type="journal article" date="2005" name="Nat. Biotechnol.">
        <title>Complete genome sequence of the acetic acid bacterium Gluconobacter oxydans.</title>
        <authorList>
            <person name="Prust C."/>
            <person name="Hoffmeister M."/>
            <person name="Liesegang H."/>
            <person name="Wiezer A."/>
            <person name="Fricke W.F."/>
            <person name="Ehrenreich A."/>
            <person name="Gottschalk G."/>
            <person name="Deppenmeier U."/>
        </authorList>
    </citation>
    <scope>NUCLEOTIDE SEQUENCE [LARGE SCALE GENOMIC DNA]</scope>
    <source>
        <strain>621H</strain>
    </source>
</reference>
<accession>Q5FRJ1</accession>
<accession>Q9RM33</accession>